<gene>
    <name type="primary">PIP2-7</name>
    <name type="ordered locus">Os09g0541000</name>
    <name type="ordered locus">LOC_Os09g36930</name>
    <name type="ORF">B1274F11.29-1</name>
    <name type="ORF">B1274F11.29-2</name>
    <name type="ORF">P0478E02.3</name>
</gene>
<name>PIP27_ORYSJ</name>
<accession>Q651D5</accession>
<accession>B7EE03</accession>
<accession>Q0IZY9</accession>
<accession>Q7XJ23</accession>
<feature type="chain" id="PRO_0000064040" description="Probable aquaporin PIP2-7">
    <location>
        <begin position="1"/>
        <end position="290"/>
    </location>
</feature>
<feature type="transmembrane region" description="Helical; Name=1" evidence="2">
    <location>
        <begin position="45"/>
        <end position="65"/>
    </location>
</feature>
<feature type="transmembrane region" description="Helical; Name=2" evidence="2">
    <location>
        <begin position="79"/>
        <end position="99"/>
    </location>
</feature>
<feature type="transmembrane region" description="Helical; Name=3" evidence="2">
    <location>
        <begin position="128"/>
        <end position="148"/>
    </location>
</feature>
<feature type="transmembrane region" description="Helical; Name=4" evidence="2">
    <location>
        <begin position="168"/>
        <end position="188"/>
    </location>
</feature>
<feature type="transmembrane region" description="Helical; Name=5" evidence="2">
    <location>
        <begin position="202"/>
        <end position="222"/>
    </location>
</feature>
<feature type="transmembrane region" description="Helical; Name=6" evidence="2">
    <location>
        <begin position="252"/>
        <end position="272"/>
    </location>
</feature>
<feature type="short sequence motif" description="NPA 1">
    <location>
        <begin position="109"/>
        <end position="111"/>
    </location>
</feature>
<feature type="short sequence motif" description="NPA 2">
    <location>
        <begin position="230"/>
        <end position="232"/>
    </location>
</feature>
<feature type="splice variant" id="VSP_016230" description="In isoform 2." evidence="4">
    <location>
        <begin position="144"/>
        <end position="176"/>
    </location>
</feature>
<proteinExistence type="evidence at transcript level"/>
<reference key="1">
    <citation type="journal article" date="2005" name="Nature">
        <title>The map-based sequence of the rice genome.</title>
        <authorList>
            <consortium name="International rice genome sequencing project (IRGSP)"/>
        </authorList>
    </citation>
    <scope>NUCLEOTIDE SEQUENCE [LARGE SCALE GENOMIC DNA]</scope>
    <source>
        <strain>cv. Nipponbare</strain>
    </source>
</reference>
<reference key="2">
    <citation type="journal article" date="2008" name="Nucleic Acids Res.">
        <title>The rice annotation project database (RAP-DB): 2008 update.</title>
        <authorList>
            <consortium name="The rice annotation project (RAP)"/>
        </authorList>
    </citation>
    <scope>GENOME REANNOTATION</scope>
    <source>
        <strain>cv. Nipponbare</strain>
    </source>
</reference>
<reference key="3">
    <citation type="journal article" date="2013" name="Rice">
        <title>Improvement of the Oryza sativa Nipponbare reference genome using next generation sequence and optical map data.</title>
        <authorList>
            <person name="Kawahara Y."/>
            <person name="de la Bastide M."/>
            <person name="Hamilton J.P."/>
            <person name="Kanamori H."/>
            <person name="McCombie W.R."/>
            <person name="Ouyang S."/>
            <person name="Schwartz D.C."/>
            <person name="Tanaka T."/>
            <person name="Wu J."/>
            <person name="Zhou S."/>
            <person name="Childs K.L."/>
            <person name="Davidson R.M."/>
            <person name="Lin H."/>
            <person name="Quesada-Ocampo L."/>
            <person name="Vaillancourt B."/>
            <person name="Sakai H."/>
            <person name="Lee S.S."/>
            <person name="Kim J."/>
            <person name="Numa H."/>
            <person name="Itoh T."/>
            <person name="Buell C.R."/>
            <person name="Matsumoto T."/>
        </authorList>
    </citation>
    <scope>GENOME REANNOTATION</scope>
    <source>
        <strain>cv. Nipponbare</strain>
    </source>
</reference>
<reference key="4">
    <citation type="journal article" date="2003" name="Science">
        <title>Collection, mapping, and annotation of over 28,000 cDNA clones from japonica rice.</title>
        <authorList>
            <consortium name="The rice full-length cDNA consortium"/>
        </authorList>
    </citation>
    <scope>NUCLEOTIDE SEQUENCE [LARGE SCALE MRNA] (ISOFORMS 1 AND 2)</scope>
    <source>
        <strain>cv. Nipponbare</strain>
    </source>
</reference>
<reference key="5">
    <citation type="journal article" date="2005" name="Plant Cell Physiol.">
        <title>Identification of 33 rice aquaporin genes and analysis of their expression and function.</title>
        <authorList>
            <person name="Sakurai J."/>
            <person name="Ishikawa F."/>
            <person name="Yamaguchi T."/>
            <person name="Uemura M."/>
            <person name="Maeshima M."/>
        </authorList>
    </citation>
    <scope>NOMENCLATURE</scope>
    <scope>TISSUE SPECIFICITY</scope>
</reference>
<comment type="function">
    <text evidence="1">Aquaporins facilitate the transport of water and small neutral solutes across cell membranes.</text>
</comment>
<comment type="subcellular location">
    <subcellularLocation>
        <location evidence="1">Cell membrane</location>
        <topology evidence="1">Multi-pass membrane protein</topology>
    </subcellularLocation>
</comment>
<comment type="alternative products">
    <event type="alternative splicing"/>
    <isoform>
        <id>Q651D5-1</id>
        <name>1</name>
        <sequence type="displayed"/>
    </isoform>
    <isoform>
        <id>Q651D5-2</id>
        <name>2</name>
        <sequence type="described" ref="VSP_016230"/>
    </isoform>
</comment>
<comment type="tissue specificity">
    <text evidence="3">Expressed in roots.</text>
</comment>
<comment type="domain">
    <text>Aquaporins contain two tandem repeats each containing three membrane-spanning domains and a pore-forming loop with the signature motif Asn-Pro-Ala (NPA).</text>
</comment>
<comment type="similarity">
    <text evidence="5">Belongs to the MIP/aquaporin (TC 1.A.8) family. PIP (TC 1.A.8.11) subfamily.</text>
</comment>
<protein>
    <recommendedName>
        <fullName>Probable aquaporin PIP2-7</fullName>
    </recommendedName>
    <alternativeName>
        <fullName>OsPIP2;7</fullName>
    </alternativeName>
    <alternativeName>
        <fullName>Plasma membrane intrinsic protein 2-7</fullName>
    </alternativeName>
</protein>
<organism>
    <name type="scientific">Oryza sativa subsp. japonica</name>
    <name type="common">Rice</name>
    <dbReference type="NCBI Taxonomy" id="39947"/>
    <lineage>
        <taxon>Eukaryota</taxon>
        <taxon>Viridiplantae</taxon>
        <taxon>Streptophyta</taxon>
        <taxon>Embryophyta</taxon>
        <taxon>Tracheophyta</taxon>
        <taxon>Spermatophyta</taxon>
        <taxon>Magnoliopsida</taxon>
        <taxon>Liliopsida</taxon>
        <taxon>Poales</taxon>
        <taxon>Poaceae</taxon>
        <taxon>BOP clade</taxon>
        <taxon>Oryzoideae</taxon>
        <taxon>Oryzeae</taxon>
        <taxon>Oryzinae</taxon>
        <taxon>Oryza</taxon>
        <taxon>Oryza sativa</taxon>
    </lineage>
</organism>
<evidence type="ECO:0000250" key="1"/>
<evidence type="ECO:0000255" key="2"/>
<evidence type="ECO:0000269" key="3">
    <source>
    </source>
</evidence>
<evidence type="ECO:0000303" key="4">
    <source>
    </source>
</evidence>
<evidence type="ECO:0000305" key="5"/>
<keyword id="KW-0025">Alternative splicing</keyword>
<keyword id="KW-1003">Cell membrane</keyword>
<keyword id="KW-0472">Membrane</keyword>
<keyword id="KW-1185">Reference proteome</keyword>
<keyword id="KW-0677">Repeat</keyword>
<keyword id="KW-0812">Transmembrane</keyword>
<keyword id="KW-1133">Transmembrane helix</keyword>
<keyword id="KW-0813">Transport</keyword>
<dbReference type="EMBL" id="AB109206">
    <property type="protein sequence ID" value="BAC79184.1"/>
    <property type="molecule type" value="Genomic_DNA"/>
</dbReference>
<dbReference type="EMBL" id="AP006149">
    <property type="protein sequence ID" value="BAD46581.1"/>
    <property type="molecule type" value="Genomic_DNA"/>
</dbReference>
<dbReference type="EMBL" id="AP006149">
    <property type="protein sequence ID" value="BAD46582.1"/>
    <property type="molecule type" value="Genomic_DNA"/>
</dbReference>
<dbReference type="EMBL" id="AP008215">
    <property type="protein sequence ID" value="BAF25726.1"/>
    <property type="molecule type" value="Genomic_DNA"/>
</dbReference>
<dbReference type="EMBL" id="AP014965">
    <property type="protein sequence ID" value="BAT09200.1"/>
    <property type="molecule type" value="Genomic_DNA"/>
</dbReference>
<dbReference type="EMBL" id="AP014965">
    <property type="protein sequence ID" value="BAT09201.1"/>
    <property type="molecule type" value="Genomic_DNA"/>
</dbReference>
<dbReference type="EMBL" id="AK067792">
    <property type="protein sequence ID" value="BAG90600.1"/>
    <property type="molecule type" value="mRNA"/>
</dbReference>
<dbReference type="EMBL" id="AK104786">
    <property type="protein sequence ID" value="BAG96951.1"/>
    <property type="molecule type" value="mRNA"/>
</dbReference>
<dbReference type="EMBL" id="AK109439">
    <property type="protein sequence ID" value="BAG98750.1"/>
    <property type="molecule type" value="mRNA"/>
</dbReference>
<dbReference type="EMBL" id="AK119719">
    <property type="status" value="NOT_ANNOTATED_CDS"/>
    <property type="molecule type" value="mRNA"/>
</dbReference>
<dbReference type="RefSeq" id="XP_015651220.1">
    <property type="nucleotide sequence ID" value="XM_015795734.1"/>
</dbReference>
<dbReference type="SMR" id="Q651D5"/>
<dbReference type="FunCoup" id="Q651D5">
    <property type="interactions" value="258"/>
</dbReference>
<dbReference type="STRING" id="39947.Q651D5"/>
<dbReference type="PaxDb" id="39947-Q651D5"/>
<dbReference type="EnsemblPlants" id="Os09t0541000-01">
    <molecule id="Q651D5-1"/>
    <property type="protein sequence ID" value="Os09t0541000-01"/>
    <property type="gene ID" value="Os09g0541000"/>
</dbReference>
<dbReference type="Gramene" id="Os09t0541000-01">
    <molecule id="Q651D5-1"/>
    <property type="protein sequence ID" value="Os09t0541000-01"/>
    <property type="gene ID" value="Os09g0541000"/>
</dbReference>
<dbReference type="KEGG" id="dosa:Os09g0541000"/>
<dbReference type="eggNOG" id="KOG0223">
    <property type="taxonomic scope" value="Eukaryota"/>
</dbReference>
<dbReference type="InParanoid" id="Q651D5"/>
<dbReference type="OMA" id="AMCHLWA"/>
<dbReference type="OrthoDB" id="3222at2759"/>
<dbReference type="PlantReactome" id="R-OSA-9618218">
    <property type="pathway name" value="Arsenic uptake and detoxification"/>
</dbReference>
<dbReference type="Proteomes" id="UP000000763">
    <property type="component" value="Chromosome 9"/>
</dbReference>
<dbReference type="Proteomes" id="UP000059680">
    <property type="component" value="Chromosome 9"/>
</dbReference>
<dbReference type="GO" id="GO:0005886">
    <property type="term" value="C:plasma membrane"/>
    <property type="evidence" value="ECO:0000318"/>
    <property type="project" value="GO_Central"/>
</dbReference>
<dbReference type="GO" id="GO:0015250">
    <property type="term" value="F:water channel activity"/>
    <property type="evidence" value="ECO:0000318"/>
    <property type="project" value="GO_Central"/>
</dbReference>
<dbReference type="CDD" id="cd00333">
    <property type="entry name" value="MIP"/>
    <property type="match status" value="1"/>
</dbReference>
<dbReference type="FunFam" id="1.20.1080.10:FF:000021">
    <property type="entry name" value="Probable aquaporin PIP2-8"/>
    <property type="match status" value="1"/>
</dbReference>
<dbReference type="Gene3D" id="1.20.1080.10">
    <property type="entry name" value="Glycerol uptake facilitator protein"/>
    <property type="match status" value="1"/>
</dbReference>
<dbReference type="InterPro" id="IPR023271">
    <property type="entry name" value="Aquaporin-like"/>
</dbReference>
<dbReference type="InterPro" id="IPR034294">
    <property type="entry name" value="Aquaporin_transptr"/>
</dbReference>
<dbReference type="InterPro" id="IPR000425">
    <property type="entry name" value="MIP"/>
</dbReference>
<dbReference type="InterPro" id="IPR022357">
    <property type="entry name" value="MIP_CS"/>
</dbReference>
<dbReference type="NCBIfam" id="TIGR00861">
    <property type="entry name" value="MIP"/>
    <property type="match status" value="1"/>
</dbReference>
<dbReference type="PANTHER" id="PTHR45687">
    <property type="entry name" value="AQUAPORIN OR AQUAGLYCEROPORIN RELATED"/>
    <property type="match status" value="1"/>
</dbReference>
<dbReference type="Pfam" id="PF00230">
    <property type="entry name" value="MIP"/>
    <property type="match status" value="1"/>
</dbReference>
<dbReference type="PRINTS" id="PR00783">
    <property type="entry name" value="MINTRINSICP"/>
</dbReference>
<dbReference type="SUPFAM" id="SSF81338">
    <property type="entry name" value="Aquaporin-like"/>
    <property type="match status" value="1"/>
</dbReference>
<dbReference type="PROSITE" id="PS00221">
    <property type="entry name" value="MIP"/>
    <property type="match status" value="1"/>
</dbReference>
<sequence>MASKEEVAVETVEGGAAAAKAPYWDPPPAPLLDTSELGKWSLYRALIAEFMATLIFLYVSIATVIGYKNQRATVDACTGVGYLGVAWSFGATIFVLVYCTGGVSGGHINPAVTLGLFFGRKLSLVRTVLYVVAQCLGAIAGAGIVKGIMKRPYDALGGGANTVSDGYSAAGALGAEIVGTFILVYTVFSATDPKRTARDSFIPVLVPLPIGFAVFVVHLATIPITGTGINPARSLGAAVLYNQHAAWKDHWIFWVGPVIGAFLAAAYHKLVLRGEAAKALSSFRSTSVTA</sequence>